<gene>
    <name type="primary">LINC00575</name>
    <name type="synonym">C4orf11</name>
</gene>
<evidence type="ECO:0000269" key="1">
    <source>
    </source>
</evidence>
<evidence type="ECO:0000305" key="2"/>
<sequence>MPTSETSWWPGACLCSSCAWTSDSRFFNLWTLGLAPAASQGFSGLKPQTDDCTVSFPGFEAFGLGLSHYWHLSFPACRQSIMGLCLVIVLANSS</sequence>
<feature type="chain" id="PRO_0000324602" description="Putative uncharacterized protein encoded by LINC00575">
    <location>
        <begin position="1"/>
        <end position="94"/>
    </location>
</feature>
<dbReference type="EMBL" id="AY316301">
    <property type="protein sequence ID" value="AAR08267.1"/>
    <property type="molecule type" value="mRNA"/>
</dbReference>
<dbReference type="EMBL" id="AY316302">
    <property type="protein sequence ID" value="AAR08268.1"/>
    <property type="molecule type" value="mRNA"/>
</dbReference>
<dbReference type="BioMuta" id="HGNC:21342"/>
<dbReference type="AGR" id="HGNC:21342"/>
<dbReference type="GeneCards" id="LINC00575"/>
<dbReference type="HGNC" id="HGNC:21342">
    <property type="gene designation" value="LINC00575"/>
</dbReference>
<dbReference type="neXtProt" id="NX_Q6W349"/>
<dbReference type="InParanoid" id="Q6W349"/>
<dbReference type="PAN-GO" id="Q6W349">
    <property type="GO annotations" value="0 GO annotations based on evolutionary models"/>
</dbReference>
<dbReference type="PathwayCommons" id="Q6W349"/>
<dbReference type="Pharos" id="Q6W349">
    <property type="development level" value="Tdark"/>
</dbReference>
<dbReference type="PRO" id="PR:Q6W349"/>
<dbReference type="Proteomes" id="UP000005640">
    <property type="component" value="Unplaced"/>
</dbReference>
<dbReference type="RNAct" id="Q6W349">
    <property type="molecule type" value="protein"/>
</dbReference>
<organism>
    <name type="scientific">Homo sapiens</name>
    <name type="common">Human</name>
    <dbReference type="NCBI Taxonomy" id="9606"/>
    <lineage>
        <taxon>Eukaryota</taxon>
        <taxon>Metazoa</taxon>
        <taxon>Chordata</taxon>
        <taxon>Craniata</taxon>
        <taxon>Vertebrata</taxon>
        <taxon>Euteleostomi</taxon>
        <taxon>Mammalia</taxon>
        <taxon>Eutheria</taxon>
        <taxon>Euarchontoglires</taxon>
        <taxon>Primates</taxon>
        <taxon>Haplorrhini</taxon>
        <taxon>Catarrhini</taxon>
        <taxon>Hominidae</taxon>
        <taxon>Homo</taxon>
    </lineage>
</organism>
<comment type="tissue specificity">
    <text evidence="1">Specifically expressed in retina and retinal pigment epithelium.</text>
</comment>
<comment type="caution">
    <text evidence="2">Product of a dubious CDS prediction. May be a non-coding RNA.</text>
</comment>
<keyword id="KW-1185">Reference proteome</keyword>
<protein>
    <recommendedName>
        <fullName>Putative uncharacterized protein encoded by LINC00575</fullName>
    </recommendedName>
</protein>
<reference key="1">
    <citation type="journal article" date="2004" name="Cytogenet. Genome Res.">
        <title>Identifying differentially expressed genes in the mammalian retina and the retinal pigment epithelium by suppression subtractive hybridization.</title>
        <authorList>
            <person name="Schulz H.L."/>
            <person name="Rahman F.A."/>
            <person name="Fadl El Moula F.M."/>
            <person name="Stojic J."/>
            <person name="Gehrig A."/>
            <person name="Weber B.H.F."/>
        </authorList>
    </citation>
    <scope>NUCLEOTIDE SEQUENCE [MRNA]</scope>
    <scope>TISSUE SPECIFICITY</scope>
</reference>
<accession>Q6W349</accession>
<proteinExistence type="uncertain"/>
<name>CD011_HUMAN</name>